<feature type="chain" id="PRO_1000200220" description="Probable ECA polymerase">
    <location>
        <begin position="1"/>
        <end position="450"/>
    </location>
</feature>
<feature type="transmembrane region" description="Helical" evidence="1">
    <location>
        <begin position="6"/>
        <end position="26"/>
    </location>
</feature>
<feature type="transmembrane region" description="Helical" evidence="1">
    <location>
        <begin position="37"/>
        <end position="57"/>
    </location>
</feature>
<feature type="transmembrane region" description="Helical" evidence="1">
    <location>
        <begin position="63"/>
        <end position="83"/>
    </location>
</feature>
<feature type="transmembrane region" description="Helical" evidence="1">
    <location>
        <begin position="118"/>
        <end position="138"/>
    </location>
</feature>
<feature type="transmembrane region" description="Helical" evidence="1">
    <location>
        <begin position="155"/>
        <end position="175"/>
    </location>
</feature>
<feature type="transmembrane region" description="Helical" evidence="1">
    <location>
        <begin position="181"/>
        <end position="201"/>
    </location>
</feature>
<feature type="transmembrane region" description="Helical" evidence="1">
    <location>
        <begin position="207"/>
        <end position="227"/>
    </location>
</feature>
<feature type="transmembrane region" description="Helical" evidence="1">
    <location>
        <begin position="228"/>
        <end position="248"/>
    </location>
</feature>
<feature type="transmembrane region" description="Helical" evidence="1">
    <location>
        <begin position="341"/>
        <end position="361"/>
    </location>
</feature>
<feature type="transmembrane region" description="Helical" evidence="1">
    <location>
        <begin position="378"/>
        <end position="398"/>
    </location>
</feature>
<feature type="transmembrane region" description="Helical" evidence="1">
    <location>
        <begin position="410"/>
        <end position="430"/>
    </location>
</feature>
<proteinExistence type="inferred from homology"/>
<gene>
    <name evidence="1" type="primary">wzyE</name>
    <name type="ordered locus">SbBS512_E4127</name>
</gene>
<sequence>MSLLQFSGLFVVWLLCTLFIATLTWFEFRRVRFNFNVFFSLLFLLTFFFGFPLTSVLVFRFDVGVAPPEILLQALLSAGCFYAVYYVTYKTRLRKRVADVPRRPLFTMNRVETNLTWVILMGIALVSVGIFFMHNGFLLFRLNSYSQIFSSEVSGVALKRFFYFFIPAMLVVYFLRQDSKAWLFFLVSTVAFGLLTYMIVGGTRANIIIAFAIFLFIGIIRGWISLWMLAAAGVLGIVGMFWLALKRYGMNVSGDEAFYTFLYLTRDTFSPWENLALLLQNYDNIDFQGLAPIVRDFYVFIPSWLWPGRPSMVLNSANYFTREVLNNHSGLAISPTLIGSLVVMGGALFIPLGAIVVGLIIKWFDWLYELGNREPNRYKAAILHSFCFGAIFNMIVLAREGLDSFVSRVVFFIVVFGACLMIAKLLYWLFESAGLIHKRTKSSLRTQVEG</sequence>
<dbReference type="EMBL" id="CP001063">
    <property type="protein sequence ID" value="ACD08480.1"/>
    <property type="molecule type" value="Genomic_DNA"/>
</dbReference>
<dbReference type="RefSeq" id="WP_000055128.1">
    <property type="nucleotide sequence ID" value="NC_010658.1"/>
</dbReference>
<dbReference type="STRING" id="344609.SbBS512_E4127"/>
<dbReference type="KEGG" id="sbc:SbBS512_E4127"/>
<dbReference type="HOGENOM" id="CLU_049711_0_0_6"/>
<dbReference type="UniPathway" id="UPA00566"/>
<dbReference type="Proteomes" id="UP000001030">
    <property type="component" value="Chromosome"/>
</dbReference>
<dbReference type="GO" id="GO:0005886">
    <property type="term" value="C:plasma membrane"/>
    <property type="evidence" value="ECO:0007669"/>
    <property type="project" value="UniProtKB-SubCell"/>
</dbReference>
<dbReference type="GO" id="GO:0009246">
    <property type="term" value="P:enterobacterial common antigen biosynthetic process"/>
    <property type="evidence" value="ECO:0007669"/>
    <property type="project" value="UniProtKB-UniRule"/>
</dbReference>
<dbReference type="HAMAP" id="MF_01003">
    <property type="entry name" value="WzyE"/>
    <property type="match status" value="1"/>
</dbReference>
<dbReference type="InterPro" id="IPR010691">
    <property type="entry name" value="WzyE"/>
</dbReference>
<dbReference type="NCBIfam" id="NF002820">
    <property type="entry name" value="PRK02975.1"/>
    <property type="match status" value="1"/>
</dbReference>
<dbReference type="Pfam" id="PF06899">
    <property type="entry name" value="WzyE"/>
    <property type="match status" value="1"/>
</dbReference>
<organism>
    <name type="scientific">Shigella boydii serotype 18 (strain CDC 3083-94 / BS512)</name>
    <dbReference type="NCBI Taxonomy" id="344609"/>
    <lineage>
        <taxon>Bacteria</taxon>
        <taxon>Pseudomonadati</taxon>
        <taxon>Pseudomonadota</taxon>
        <taxon>Gammaproteobacteria</taxon>
        <taxon>Enterobacterales</taxon>
        <taxon>Enterobacteriaceae</taxon>
        <taxon>Shigella</taxon>
    </lineage>
</organism>
<comment type="function">
    <text evidence="1">Probably involved in the polymerization of enterobacterial common antigen (ECA) trisaccharide repeat units.</text>
</comment>
<comment type="pathway">
    <text evidence="1">Bacterial outer membrane biogenesis; enterobacterial common antigen biosynthesis.</text>
</comment>
<comment type="subunit">
    <text evidence="1">Probably part of a complex composed of WzxE, WzyE and WzzE.</text>
</comment>
<comment type="subcellular location">
    <subcellularLocation>
        <location evidence="1">Cell inner membrane</location>
        <topology evidence="1">Multi-pass membrane protein</topology>
    </subcellularLocation>
</comment>
<comment type="similarity">
    <text evidence="1">Belongs to the WzyE family.</text>
</comment>
<reference key="1">
    <citation type="submission" date="2008-05" db="EMBL/GenBank/DDBJ databases">
        <title>Complete sequence of Shigella boydii serotype 18 strain BS512.</title>
        <authorList>
            <person name="Rasko D.A."/>
            <person name="Rosovitz M."/>
            <person name="Maurelli A.T."/>
            <person name="Myers G."/>
            <person name="Seshadri R."/>
            <person name="Cer R."/>
            <person name="Jiang L."/>
            <person name="Ravel J."/>
            <person name="Sebastian Y."/>
        </authorList>
    </citation>
    <scope>NUCLEOTIDE SEQUENCE [LARGE SCALE GENOMIC DNA]</scope>
    <source>
        <strain>CDC 3083-94 / BS512</strain>
    </source>
</reference>
<keyword id="KW-0997">Cell inner membrane</keyword>
<keyword id="KW-1003">Cell membrane</keyword>
<keyword id="KW-0472">Membrane</keyword>
<keyword id="KW-1185">Reference proteome</keyword>
<keyword id="KW-0812">Transmembrane</keyword>
<keyword id="KW-1133">Transmembrane helix</keyword>
<name>WZYE_SHIB3</name>
<evidence type="ECO:0000255" key="1">
    <source>
        <dbReference type="HAMAP-Rule" id="MF_01003"/>
    </source>
</evidence>
<accession>B2TTZ9</accession>
<protein>
    <recommendedName>
        <fullName evidence="1">Probable ECA polymerase</fullName>
    </recommendedName>
</protein>